<proteinExistence type="evidence at protein level"/>
<protein>
    <recommendedName>
        <fullName evidence="1">Nucleoprotein</fullName>
    </recommendedName>
    <alternativeName>
        <fullName evidence="1">Nucleocapsid protein</fullName>
        <shortName evidence="1">Protein N</shortName>
    </alternativeName>
</protein>
<keyword id="KW-0002">3D-structure</keyword>
<keyword id="KW-0167">Capsid protein</keyword>
<keyword id="KW-1139">Helical capsid protein</keyword>
<keyword id="KW-1048">Host nucleus</keyword>
<keyword id="KW-0945">Host-virus interaction</keyword>
<keyword id="KW-0687">Ribonucleoprotein</keyword>
<keyword id="KW-0694">RNA-binding</keyword>
<keyword id="KW-0543">Viral nucleoprotein</keyword>
<keyword id="KW-1163">Viral penetration into host nucleus</keyword>
<keyword id="KW-0946">Virion</keyword>
<keyword id="KW-1160">Virus entry into host cell</keyword>
<sequence>MASQGTKRSYEQMETDGERQNATEIRASVGKMIDGIGRFYIQMCTELKLSDYEGRLIQNSLTVERMVLSAFDERRNRYLEEHPSAGKDPKKTGGPIYKRVNGKWMRELVLYDKEEIRRIWRQANNGDDATRGLTHMMIWHSNLNDTTYQRTRALVRTGMDPRMCSLMQGSTLPRRSGAAGAAVKGVGTMVMELIRMIKRGINDRNFWRGENGRKTRSAYERMCNILKGKFQTAAQRAMMDQVRESRNPGNAEIEDLIFSARSALILRGSVAHKSCLPACVYGPAVASGYDFEKEGYSLVGIDPFKLLQNSQVYSLIRPNENPAHKSQLVWMACHSAAFEDLRLLSFIRGTKVCPRGKLSTRGVQIASNENMDTMESSTLELRSRYWAIRTRSGGNTNQQRASAGQISVQPTFSVQRNLPFDKSTVMAAFTGNTEGRTSDMRAEIIRMMEGAKPEEVSFRGRGVFELSDEKATNPIVPSFDMSNEGSYFFGDNAEEYDN</sequence>
<organismHost>
    <name type="scientific">Aves</name>
    <dbReference type="NCBI Taxonomy" id="8782"/>
</organismHost>
<organismHost>
    <name type="scientific">Homo sapiens</name>
    <name type="common">Human</name>
    <dbReference type="NCBI Taxonomy" id="9606"/>
</organismHost>
<organismHost>
    <name type="scientific">Mysticeti</name>
    <name type="common">baleen whales</name>
    <dbReference type="NCBI Taxonomy" id="9761"/>
</organismHost>
<organismHost>
    <name type="scientific">Phocidae</name>
    <name type="common">true seals</name>
    <dbReference type="NCBI Taxonomy" id="9709"/>
</organismHost>
<organismHost>
    <name type="scientific">Sus scrofa</name>
    <name type="common">Pig</name>
    <dbReference type="NCBI Taxonomy" id="9823"/>
</organismHost>
<comment type="function">
    <text evidence="1">Encapsidates the negative strand viral RNA, protecting it from nucleases. The encapsidated genomic RNA is termed the ribonucleoprotein (RNP) and serves as template for transcription and replication. The RNP needs to be localized in the host nucleus to start an infectious cycle, but is too large to diffuse through the nuclear pore complex. NP comprises at least 2 nuclear localization signals that are responsible for the active RNP import into the nucleus through cellular importin alpha/beta pathway. Later in the infection, nclear export of RNPs are mediated through viral proteins NEP interacting with M1 which binds nucleoproteins. It is possible that nucleoprotein binds directly host exportin-1/XPO1 and plays an active role in RNPs nuclear export. M1 interaction with RNP seems to hide nucleoprotein's nuclear localization signals. Soon after a virion infects a new cell, M1 dissociates from the RNP under acidification of the virion driven by M2 protein. Dissociation of M1 from RNP unmasks nucleoprotein's nuclear localization signals, targeting the RNP to the nucleus.</text>
</comment>
<comment type="subunit">
    <text evidence="1">Homomultimerizes to form the nucleocapsid. May bind host exportin-1/XPO1. Binds to viral genomic RNA. Protein-RNA contacts are mediated by a combination of electrostatic interactions between positively charged residues and the phosphate backbone and planar interactions between aromatic side chains and bases.</text>
</comment>
<comment type="subcellular location">
    <subcellularLocation>
        <location evidence="1">Virion</location>
    </subcellularLocation>
    <subcellularLocation>
        <location evidence="1">Host nucleus</location>
    </subcellularLocation>
</comment>
<comment type="PTM">
    <text evidence="1">Late in virus-infected cells, may be cleaved from a 56-kDa protein to a 53-kDa protein by a cellular caspase. This cleavage might be a marker for the onset of apoptosis in infected cells or have a specific function in virus host interaction.</text>
</comment>
<comment type="similarity">
    <text evidence="1">Belongs to the influenza viruses nucleoprotein family.</text>
</comment>
<feature type="chain" id="PRO_0000079048" description="Nucleoprotein">
    <location>
        <begin position="1"/>
        <end position="498"/>
    </location>
</feature>
<feature type="region of interest" description="Disordered" evidence="2">
    <location>
        <begin position="1"/>
        <end position="21"/>
    </location>
</feature>
<feature type="short sequence motif" description="Unconventional nuclear localization signal" evidence="1">
    <location>
        <begin position="1"/>
        <end position="18"/>
    </location>
</feature>
<feature type="short sequence motif" description="Bipartite nuclear localization signal" evidence="1">
    <location>
        <begin position="198"/>
        <end position="216"/>
    </location>
</feature>
<feature type="compositionally biased region" description="Basic and acidic residues" evidence="2">
    <location>
        <begin position="8"/>
        <end position="21"/>
    </location>
</feature>
<accession>Q09159</accession>
<name>NCAP_I77A5</name>
<organism>
    <name type="scientific">Influenza A virus (strain A/Guangdong/38/1977 H3N2)</name>
    <dbReference type="NCBI Taxonomy" id="383593"/>
    <lineage>
        <taxon>Viruses</taxon>
        <taxon>Riboviria</taxon>
        <taxon>Orthornavirae</taxon>
        <taxon>Negarnaviricota</taxon>
        <taxon>Polyploviricotina</taxon>
        <taxon>Insthoviricetes</taxon>
        <taxon>Articulavirales</taxon>
        <taxon>Orthomyxoviridae</taxon>
        <taxon>Alphainfluenzavirus</taxon>
        <taxon>Alphainfluenzavirus influenzae</taxon>
        <taxon>Influenza A virus</taxon>
    </lineage>
</organism>
<gene>
    <name evidence="1" type="primary">NP</name>
</gene>
<dbReference type="EMBL" id="L07359">
    <property type="protein sequence ID" value="AAA51488.1"/>
    <property type="molecule type" value="Genomic_RNA"/>
</dbReference>
<dbReference type="PDB" id="8EMF">
    <property type="method" value="X-ray"/>
    <property type="resolution" value="1.80 A"/>
    <property type="chains" value="C=418-426"/>
</dbReference>
<dbReference type="PDB" id="8V50">
    <property type="method" value="X-ray"/>
    <property type="resolution" value="2.65 A"/>
    <property type="chains" value="C/H/M/R=418-426"/>
</dbReference>
<dbReference type="PDBsum" id="8EMF"/>
<dbReference type="PDBsum" id="8V50"/>
<dbReference type="SMR" id="Q09159"/>
<dbReference type="GO" id="GO:0019029">
    <property type="term" value="C:helical viral capsid"/>
    <property type="evidence" value="ECO:0007669"/>
    <property type="project" value="UniProtKB-UniRule"/>
</dbReference>
<dbReference type="GO" id="GO:0043657">
    <property type="term" value="C:host cell"/>
    <property type="evidence" value="ECO:0007669"/>
    <property type="project" value="GOC"/>
</dbReference>
<dbReference type="GO" id="GO:0042025">
    <property type="term" value="C:host cell nucleus"/>
    <property type="evidence" value="ECO:0007669"/>
    <property type="project" value="UniProtKB-SubCell"/>
</dbReference>
<dbReference type="GO" id="GO:1990904">
    <property type="term" value="C:ribonucleoprotein complex"/>
    <property type="evidence" value="ECO:0007669"/>
    <property type="project" value="UniProtKB-KW"/>
</dbReference>
<dbReference type="GO" id="GO:0019013">
    <property type="term" value="C:viral nucleocapsid"/>
    <property type="evidence" value="ECO:0007669"/>
    <property type="project" value="UniProtKB-UniRule"/>
</dbReference>
<dbReference type="GO" id="GO:0003723">
    <property type="term" value="F:RNA binding"/>
    <property type="evidence" value="ECO:0007669"/>
    <property type="project" value="UniProtKB-UniRule"/>
</dbReference>
<dbReference type="GO" id="GO:0005198">
    <property type="term" value="F:structural molecule activity"/>
    <property type="evidence" value="ECO:0007669"/>
    <property type="project" value="UniProtKB-UniRule"/>
</dbReference>
<dbReference type="GO" id="GO:0046718">
    <property type="term" value="P:symbiont entry into host cell"/>
    <property type="evidence" value="ECO:0007669"/>
    <property type="project" value="UniProtKB-KW"/>
</dbReference>
<dbReference type="GO" id="GO:0075732">
    <property type="term" value="P:viral penetration into host nucleus"/>
    <property type="evidence" value="ECO:0007669"/>
    <property type="project" value="UniProtKB-UniRule"/>
</dbReference>
<dbReference type="HAMAP" id="MF_04070">
    <property type="entry name" value="INFV_NCAP"/>
    <property type="match status" value="1"/>
</dbReference>
<dbReference type="InterPro" id="IPR002141">
    <property type="entry name" value="Flu_NP"/>
</dbReference>
<dbReference type="Pfam" id="PF00506">
    <property type="entry name" value="Flu_NP"/>
    <property type="match status" value="1"/>
</dbReference>
<dbReference type="SUPFAM" id="SSF161003">
    <property type="entry name" value="flu NP-like"/>
    <property type="match status" value="1"/>
</dbReference>
<reference key="1">
    <citation type="journal article" date="1993" name="J. Virol.">
        <title>Analysis of the evolution and variation of the human influenza A virus nucleoprotein gene from 1933 to 1990.</title>
        <authorList>
            <person name="Shu L.L."/>
            <person name="Bean W.J."/>
            <person name="Webster R.G."/>
        </authorList>
    </citation>
    <scope>NUCLEOTIDE SEQUENCE [GENOMIC RNA]</scope>
</reference>
<evidence type="ECO:0000255" key="1">
    <source>
        <dbReference type="HAMAP-Rule" id="MF_04070"/>
    </source>
</evidence>
<evidence type="ECO:0000256" key="2">
    <source>
        <dbReference type="SAM" id="MobiDB-lite"/>
    </source>
</evidence>